<accession>B2VCB2</accession>
<organism>
    <name type="scientific">Erwinia tasmaniensis (strain DSM 17950 / CFBP 7177 / CIP 109463 / NCPPB 4357 / Et1/99)</name>
    <dbReference type="NCBI Taxonomy" id="465817"/>
    <lineage>
        <taxon>Bacteria</taxon>
        <taxon>Pseudomonadati</taxon>
        <taxon>Pseudomonadota</taxon>
        <taxon>Gammaproteobacteria</taxon>
        <taxon>Enterobacterales</taxon>
        <taxon>Erwiniaceae</taxon>
        <taxon>Erwinia</taxon>
    </lineage>
</organism>
<keyword id="KW-0963">Cytoplasm</keyword>
<keyword id="KW-0489">Methyltransferase</keyword>
<keyword id="KW-1185">Reference proteome</keyword>
<keyword id="KW-0698">rRNA processing</keyword>
<keyword id="KW-0949">S-adenosyl-L-methionine</keyword>
<keyword id="KW-0808">Transferase</keyword>
<proteinExistence type="inferred from homology"/>
<protein>
    <recommendedName>
        <fullName evidence="1">Ribosomal RNA small subunit methyltransferase G</fullName>
        <ecNumber evidence="1">2.1.1.170</ecNumber>
    </recommendedName>
    <alternativeName>
        <fullName evidence="1">16S rRNA 7-methylguanosine methyltransferase</fullName>
        <shortName evidence="1">16S rRNA m7G methyltransferase</shortName>
    </alternativeName>
</protein>
<dbReference type="EC" id="2.1.1.170" evidence="1"/>
<dbReference type="EMBL" id="CU468135">
    <property type="protein sequence ID" value="CAO98529.1"/>
    <property type="molecule type" value="Genomic_DNA"/>
</dbReference>
<dbReference type="RefSeq" id="WP_012443149.1">
    <property type="nucleotide sequence ID" value="NC_010694.1"/>
</dbReference>
<dbReference type="SMR" id="B2VCB2"/>
<dbReference type="STRING" id="465817.ETA_34830"/>
<dbReference type="KEGG" id="eta:ETA_34830"/>
<dbReference type="eggNOG" id="COG0357">
    <property type="taxonomic scope" value="Bacteria"/>
</dbReference>
<dbReference type="HOGENOM" id="CLU_065341_2_2_6"/>
<dbReference type="OrthoDB" id="9808773at2"/>
<dbReference type="Proteomes" id="UP000001726">
    <property type="component" value="Chromosome"/>
</dbReference>
<dbReference type="GO" id="GO:0005829">
    <property type="term" value="C:cytosol"/>
    <property type="evidence" value="ECO:0007669"/>
    <property type="project" value="TreeGrafter"/>
</dbReference>
<dbReference type="GO" id="GO:0070043">
    <property type="term" value="F:rRNA (guanine-N7-)-methyltransferase activity"/>
    <property type="evidence" value="ECO:0007669"/>
    <property type="project" value="UniProtKB-UniRule"/>
</dbReference>
<dbReference type="CDD" id="cd02440">
    <property type="entry name" value="AdoMet_MTases"/>
    <property type="match status" value="1"/>
</dbReference>
<dbReference type="FunFam" id="3.40.50.150:FF:000032">
    <property type="entry name" value="Ribosomal RNA small subunit methyltransferase G"/>
    <property type="match status" value="1"/>
</dbReference>
<dbReference type="Gene3D" id="3.40.50.150">
    <property type="entry name" value="Vaccinia Virus protein VP39"/>
    <property type="match status" value="1"/>
</dbReference>
<dbReference type="HAMAP" id="MF_00074">
    <property type="entry name" value="16SrRNA_methyltr_G"/>
    <property type="match status" value="1"/>
</dbReference>
<dbReference type="InterPro" id="IPR003682">
    <property type="entry name" value="rRNA_ssu_MeTfrase_G"/>
</dbReference>
<dbReference type="InterPro" id="IPR029063">
    <property type="entry name" value="SAM-dependent_MTases_sf"/>
</dbReference>
<dbReference type="NCBIfam" id="TIGR00138">
    <property type="entry name" value="rsmG_gidB"/>
    <property type="match status" value="1"/>
</dbReference>
<dbReference type="PANTHER" id="PTHR31760">
    <property type="entry name" value="S-ADENOSYL-L-METHIONINE-DEPENDENT METHYLTRANSFERASES SUPERFAMILY PROTEIN"/>
    <property type="match status" value="1"/>
</dbReference>
<dbReference type="PANTHER" id="PTHR31760:SF0">
    <property type="entry name" value="S-ADENOSYL-L-METHIONINE-DEPENDENT METHYLTRANSFERASES SUPERFAMILY PROTEIN"/>
    <property type="match status" value="1"/>
</dbReference>
<dbReference type="Pfam" id="PF02527">
    <property type="entry name" value="GidB"/>
    <property type="match status" value="1"/>
</dbReference>
<dbReference type="PIRSF" id="PIRSF003078">
    <property type="entry name" value="GidB"/>
    <property type="match status" value="1"/>
</dbReference>
<dbReference type="SUPFAM" id="SSF53335">
    <property type="entry name" value="S-adenosyl-L-methionine-dependent methyltransferases"/>
    <property type="match status" value="1"/>
</dbReference>
<sequence>MINQLSALLKTAGISLSDRQKQQLVGYVEMLHKWNKAYNLTSVRDPQQMLVRHILDSIVVEPHLIGERFIDVGTGPGLPGVPLAIVRPGAHFTLLDSLGKRVRFLKQVQHELKLDNITPVQSRVEEFAGEPPFDGVISRAFASLNDMVSWCHHLPGQQGRFYALKGVLPEEEIAALPAGFRVENISPLIVPQLEGERHLVVIARH</sequence>
<name>RSMG_ERWT9</name>
<feature type="chain" id="PRO_1000092629" description="Ribosomal RNA small subunit methyltransferase G">
    <location>
        <begin position="1"/>
        <end position="205"/>
    </location>
</feature>
<feature type="binding site" evidence="1">
    <location>
        <position position="73"/>
    </location>
    <ligand>
        <name>S-adenosyl-L-methionine</name>
        <dbReference type="ChEBI" id="CHEBI:59789"/>
    </ligand>
</feature>
<feature type="binding site" evidence="1">
    <location>
        <position position="78"/>
    </location>
    <ligand>
        <name>S-adenosyl-L-methionine</name>
        <dbReference type="ChEBI" id="CHEBI:59789"/>
    </ligand>
</feature>
<feature type="binding site" evidence="1">
    <location>
        <begin position="124"/>
        <end position="125"/>
    </location>
    <ligand>
        <name>S-adenosyl-L-methionine</name>
        <dbReference type="ChEBI" id="CHEBI:59789"/>
    </ligand>
</feature>
<feature type="binding site" evidence="1">
    <location>
        <position position="139"/>
    </location>
    <ligand>
        <name>S-adenosyl-L-methionine</name>
        <dbReference type="ChEBI" id="CHEBI:59789"/>
    </ligand>
</feature>
<evidence type="ECO:0000255" key="1">
    <source>
        <dbReference type="HAMAP-Rule" id="MF_00074"/>
    </source>
</evidence>
<reference key="1">
    <citation type="journal article" date="2008" name="Environ. Microbiol.">
        <title>The genome of Erwinia tasmaniensis strain Et1/99, a non-pathogenic bacterium in the genus Erwinia.</title>
        <authorList>
            <person name="Kube M."/>
            <person name="Migdoll A.M."/>
            <person name="Mueller I."/>
            <person name="Kuhl H."/>
            <person name="Beck A."/>
            <person name="Reinhardt R."/>
            <person name="Geider K."/>
        </authorList>
    </citation>
    <scope>NUCLEOTIDE SEQUENCE [LARGE SCALE GENOMIC DNA]</scope>
    <source>
        <strain>DSM 17950 / CFBP 7177 / CIP 109463 / NCPPB 4357 / Et1/99</strain>
    </source>
</reference>
<gene>
    <name evidence="1" type="primary">rsmG</name>
    <name type="ordered locus">ETA_34830</name>
</gene>
<comment type="function">
    <text evidence="1">Specifically methylates the N7 position of guanine in position 527 of 16S rRNA.</text>
</comment>
<comment type="catalytic activity">
    <reaction evidence="1">
        <text>guanosine(527) in 16S rRNA + S-adenosyl-L-methionine = N(7)-methylguanosine(527) in 16S rRNA + S-adenosyl-L-homocysteine</text>
        <dbReference type="Rhea" id="RHEA:42732"/>
        <dbReference type="Rhea" id="RHEA-COMP:10209"/>
        <dbReference type="Rhea" id="RHEA-COMP:10210"/>
        <dbReference type="ChEBI" id="CHEBI:57856"/>
        <dbReference type="ChEBI" id="CHEBI:59789"/>
        <dbReference type="ChEBI" id="CHEBI:74269"/>
        <dbReference type="ChEBI" id="CHEBI:74480"/>
        <dbReference type="EC" id="2.1.1.170"/>
    </reaction>
</comment>
<comment type="subcellular location">
    <subcellularLocation>
        <location evidence="1">Cytoplasm</location>
    </subcellularLocation>
</comment>
<comment type="similarity">
    <text evidence="1">Belongs to the methyltransferase superfamily. RNA methyltransferase RsmG family.</text>
</comment>